<feature type="chain" id="PRO_0000183647" description="Cytochrome c oxidase subunit 2">
    <location>
        <begin position="1"/>
        <end position="227"/>
    </location>
</feature>
<feature type="topological domain" description="Mitochondrial intermembrane" evidence="3">
    <location>
        <begin position="1"/>
        <end position="14"/>
    </location>
</feature>
<feature type="transmembrane region" description="Helical; Name=I" evidence="3">
    <location>
        <begin position="15"/>
        <end position="45"/>
    </location>
</feature>
<feature type="topological domain" description="Mitochondrial matrix" evidence="3">
    <location>
        <begin position="46"/>
        <end position="59"/>
    </location>
</feature>
<feature type="transmembrane region" description="Helical; Name=II" evidence="3">
    <location>
        <begin position="60"/>
        <end position="87"/>
    </location>
</feature>
<feature type="topological domain" description="Mitochondrial intermembrane" evidence="3">
    <location>
        <begin position="88"/>
        <end position="227"/>
    </location>
</feature>
<feature type="binding site" evidence="3">
    <location>
        <position position="161"/>
    </location>
    <ligand>
        <name>Cu cation</name>
        <dbReference type="ChEBI" id="CHEBI:23378"/>
        <label>A1</label>
    </ligand>
</feature>
<feature type="binding site" evidence="3">
    <location>
        <position position="196"/>
    </location>
    <ligand>
        <name>Cu cation</name>
        <dbReference type="ChEBI" id="CHEBI:23378"/>
        <label>A1</label>
    </ligand>
</feature>
<feature type="binding site" evidence="3">
    <location>
        <position position="196"/>
    </location>
    <ligand>
        <name>Cu cation</name>
        <dbReference type="ChEBI" id="CHEBI:23378"/>
        <label>A2</label>
    </ligand>
</feature>
<feature type="binding site" evidence="3">
    <location>
        <position position="198"/>
    </location>
    <ligand>
        <name>Cu cation</name>
        <dbReference type="ChEBI" id="CHEBI:23378"/>
        <label>A2</label>
    </ligand>
</feature>
<feature type="binding site" evidence="3">
    <location>
        <position position="198"/>
    </location>
    <ligand>
        <name>Mg(2+)</name>
        <dbReference type="ChEBI" id="CHEBI:18420"/>
        <note>ligand shared with MT-CO1</note>
    </ligand>
</feature>
<feature type="binding site" evidence="3">
    <location>
        <position position="200"/>
    </location>
    <ligand>
        <name>Cu cation</name>
        <dbReference type="ChEBI" id="CHEBI:23378"/>
        <label>A1</label>
    </ligand>
</feature>
<feature type="binding site" evidence="3">
    <location>
        <position position="200"/>
    </location>
    <ligand>
        <name>Cu cation</name>
        <dbReference type="ChEBI" id="CHEBI:23378"/>
        <label>A2</label>
    </ligand>
</feature>
<feature type="binding site" evidence="3">
    <location>
        <position position="204"/>
    </location>
    <ligand>
        <name>Cu cation</name>
        <dbReference type="ChEBI" id="CHEBI:23378"/>
        <label>A2</label>
    </ligand>
</feature>
<feature type="binding site" evidence="3">
    <location>
        <position position="207"/>
    </location>
    <ligand>
        <name>Cu cation</name>
        <dbReference type="ChEBI" id="CHEBI:23378"/>
        <label>A1</label>
    </ligand>
</feature>
<feature type="sequence conflict" description="In Ref. 2; BAA07312." evidence="4" ref="2">
    <original>L</original>
    <variation>V</variation>
    <location>
        <position position="142"/>
    </location>
</feature>
<name>COX2_PANPA</name>
<gene>
    <name type="primary">MT-CO2</name>
    <name type="synonym">COII</name>
    <name type="synonym">COX2</name>
    <name type="synonym">COXII</name>
    <name type="synonym">MTCO2</name>
</gene>
<protein>
    <recommendedName>
        <fullName>Cytochrome c oxidase subunit 2</fullName>
        <ecNumber>7.1.1.9</ecNumber>
    </recommendedName>
    <alternativeName>
        <fullName>Cytochrome c oxidase polypeptide II</fullName>
    </alternativeName>
</protein>
<accession>P26457</accession>
<accession>Q7GIM4</accession>
<dbReference type="EC" id="7.1.1.9"/>
<dbReference type="EMBL" id="M58009">
    <property type="protein sequence ID" value="AAA20069.1"/>
    <property type="molecule type" value="Unassigned_DNA"/>
</dbReference>
<dbReference type="EMBL" id="D38116">
    <property type="protein sequence ID" value="BAA07312.1"/>
    <property type="molecule type" value="Genomic_DNA"/>
</dbReference>
<dbReference type="RefSeq" id="NP_008202.1">
    <property type="nucleotide sequence ID" value="NC_001644.1"/>
</dbReference>
<dbReference type="SMR" id="P26457"/>
<dbReference type="STRING" id="9597.ENSPPAP00000000004"/>
<dbReference type="GeneID" id="807874"/>
<dbReference type="KEGG" id="pps:807874"/>
<dbReference type="CTD" id="4513"/>
<dbReference type="Proteomes" id="UP000240080">
    <property type="component" value="Mitochondrion"/>
</dbReference>
<dbReference type="GO" id="GO:0005743">
    <property type="term" value="C:mitochondrial inner membrane"/>
    <property type="evidence" value="ECO:0007669"/>
    <property type="project" value="UniProtKB-SubCell"/>
</dbReference>
<dbReference type="GO" id="GO:0045277">
    <property type="term" value="C:respiratory chain complex IV"/>
    <property type="evidence" value="ECO:0000250"/>
    <property type="project" value="UniProtKB"/>
</dbReference>
<dbReference type="GO" id="GO:0005507">
    <property type="term" value="F:copper ion binding"/>
    <property type="evidence" value="ECO:0007669"/>
    <property type="project" value="InterPro"/>
</dbReference>
<dbReference type="GO" id="GO:0004129">
    <property type="term" value="F:cytochrome-c oxidase activity"/>
    <property type="evidence" value="ECO:0007669"/>
    <property type="project" value="UniProtKB-EC"/>
</dbReference>
<dbReference type="GO" id="GO:0042773">
    <property type="term" value="P:ATP synthesis coupled electron transport"/>
    <property type="evidence" value="ECO:0007669"/>
    <property type="project" value="TreeGrafter"/>
</dbReference>
<dbReference type="CDD" id="cd13912">
    <property type="entry name" value="CcO_II_C"/>
    <property type="match status" value="1"/>
</dbReference>
<dbReference type="FunFam" id="1.10.287.90:FF:000001">
    <property type="entry name" value="Cytochrome c oxidase subunit 2"/>
    <property type="match status" value="1"/>
</dbReference>
<dbReference type="FunFam" id="2.60.40.420:FF:000001">
    <property type="entry name" value="Cytochrome c oxidase subunit 2"/>
    <property type="match status" value="1"/>
</dbReference>
<dbReference type="Gene3D" id="1.10.287.90">
    <property type="match status" value="1"/>
</dbReference>
<dbReference type="Gene3D" id="2.60.40.420">
    <property type="entry name" value="Cupredoxins - blue copper proteins"/>
    <property type="match status" value="1"/>
</dbReference>
<dbReference type="InterPro" id="IPR045187">
    <property type="entry name" value="CcO_II"/>
</dbReference>
<dbReference type="InterPro" id="IPR002429">
    <property type="entry name" value="CcO_II-like_C"/>
</dbReference>
<dbReference type="InterPro" id="IPR034210">
    <property type="entry name" value="CcO_II_C"/>
</dbReference>
<dbReference type="InterPro" id="IPR001505">
    <property type="entry name" value="Copper_CuA"/>
</dbReference>
<dbReference type="InterPro" id="IPR008972">
    <property type="entry name" value="Cupredoxin"/>
</dbReference>
<dbReference type="InterPro" id="IPR014222">
    <property type="entry name" value="Cyt_c_oxidase_su2"/>
</dbReference>
<dbReference type="InterPro" id="IPR011759">
    <property type="entry name" value="Cyt_c_oxidase_su2_TM_dom"/>
</dbReference>
<dbReference type="InterPro" id="IPR036257">
    <property type="entry name" value="Cyt_c_oxidase_su2_TM_sf"/>
</dbReference>
<dbReference type="NCBIfam" id="TIGR02866">
    <property type="entry name" value="CoxB"/>
    <property type="match status" value="1"/>
</dbReference>
<dbReference type="PANTHER" id="PTHR22888:SF9">
    <property type="entry name" value="CYTOCHROME C OXIDASE SUBUNIT 2"/>
    <property type="match status" value="1"/>
</dbReference>
<dbReference type="PANTHER" id="PTHR22888">
    <property type="entry name" value="CYTOCHROME C OXIDASE, SUBUNIT II"/>
    <property type="match status" value="1"/>
</dbReference>
<dbReference type="Pfam" id="PF00116">
    <property type="entry name" value="COX2"/>
    <property type="match status" value="1"/>
</dbReference>
<dbReference type="Pfam" id="PF02790">
    <property type="entry name" value="COX2_TM"/>
    <property type="match status" value="1"/>
</dbReference>
<dbReference type="PRINTS" id="PR01166">
    <property type="entry name" value="CYCOXIDASEII"/>
</dbReference>
<dbReference type="SUPFAM" id="SSF49503">
    <property type="entry name" value="Cupredoxins"/>
    <property type="match status" value="1"/>
</dbReference>
<dbReference type="SUPFAM" id="SSF81464">
    <property type="entry name" value="Cytochrome c oxidase subunit II-like, transmembrane region"/>
    <property type="match status" value="1"/>
</dbReference>
<dbReference type="PROSITE" id="PS00078">
    <property type="entry name" value="COX2"/>
    <property type="match status" value="1"/>
</dbReference>
<dbReference type="PROSITE" id="PS50857">
    <property type="entry name" value="COX2_CUA"/>
    <property type="match status" value="1"/>
</dbReference>
<dbReference type="PROSITE" id="PS50999">
    <property type="entry name" value="COX2_TM"/>
    <property type="match status" value="1"/>
</dbReference>
<comment type="function">
    <text evidence="2">Component of the cytochrome c oxidase, the last enzyme in the mitochondrial electron transport chain which drives oxidative phosphorylation. The respiratory chain contains 3 multisubunit complexes succinate dehydrogenase (complex II, CII), ubiquinol-cytochrome c oxidoreductase (cytochrome b-c1 complex, complex III, CIII) and cytochrome c oxidase (complex IV, CIV), that cooperate to transfer electrons derived from NADH and succinate to molecular oxygen, creating an electrochemical gradient over the inner membrane that drives transmembrane transport and the ATP synthase. Cytochrome c oxidase is the component of the respiratory chain that catalyzes the reduction of oxygen to water. Electrons originating from reduced cytochrome c in the intermembrane space (IMS) are transferred via the dinuclear copper A center (CU(A)) of subunit 2 and heme A of subunit 1 to the active site in subunit 1, a binuclear center (BNC) formed by heme A3 and copper B (CU(B)). The BNC reduces molecular oxygen to 2 water molecules using 4 electrons from cytochrome c in the IMS and 4 protons from the mitochondrial matrix.</text>
</comment>
<comment type="catalytic activity">
    <reaction evidence="2">
        <text>4 Fe(II)-[cytochrome c] + O2 + 8 H(+)(in) = 4 Fe(III)-[cytochrome c] + 2 H2O + 4 H(+)(out)</text>
        <dbReference type="Rhea" id="RHEA:11436"/>
        <dbReference type="Rhea" id="RHEA-COMP:10350"/>
        <dbReference type="Rhea" id="RHEA-COMP:14399"/>
        <dbReference type="ChEBI" id="CHEBI:15377"/>
        <dbReference type="ChEBI" id="CHEBI:15378"/>
        <dbReference type="ChEBI" id="CHEBI:15379"/>
        <dbReference type="ChEBI" id="CHEBI:29033"/>
        <dbReference type="ChEBI" id="CHEBI:29034"/>
        <dbReference type="EC" id="7.1.1.9"/>
    </reaction>
    <physiologicalReaction direction="left-to-right" evidence="2">
        <dbReference type="Rhea" id="RHEA:11437"/>
    </physiologicalReaction>
</comment>
<comment type="cofactor">
    <cofactor evidence="3">
        <name>Cu cation</name>
        <dbReference type="ChEBI" id="CHEBI:23378"/>
    </cofactor>
    <text evidence="3">Binds a dinuclear copper A center per subunit.</text>
</comment>
<comment type="subunit">
    <text evidence="1 3">Component of the cytochrome c oxidase (complex IV, CIV), a multisubunit enzyme composed of 14 subunits. The complex is composed of a catalytic core of 3 subunits MT-CO1, MT-CO2 and MT-CO3, encoded in the mitochondrial DNA, and 11 supernumerary subunits COX4I, COX5A, COX5B, COX6A, COX6B, COX6C, COX7A, COX7B, COX7C, COX8 and NDUFA4, which are encoded in the nuclear genome. The complex exists as a monomer or a dimer and forms supercomplexes (SCs) in the inner mitochondrial membrane with NADH-ubiquinone oxidoreductase (complex I, CI) and ubiquinol-cytochrome c oxidoreductase (cytochrome b-c1 complex, complex III, CIII), resulting in different assemblies (supercomplex SCI(1)III(2)IV(1) and megacomplex MCI(2)III(2)IV(2)) (By similarity). Found in a complex with TMEM177, COA6, COX18, COX20, SCO1 and SCO2. Interacts with TMEM177 in a COX20-dependent manner. Interacts with COX20. Interacts with COX16 (By similarity).</text>
</comment>
<comment type="subcellular location">
    <subcellularLocation>
        <location evidence="3">Mitochondrion inner membrane</location>
        <topology evidence="3">Multi-pass membrane protein</topology>
    </subcellularLocation>
</comment>
<comment type="similarity">
    <text evidence="4">Belongs to the cytochrome c oxidase subunit 2 family.</text>
</comment>
<reference key="1">
    <citation type="journal article" date="1991" name="Proc. Natl. Acad. Sci. U.S.A.">
        <title>Resolution of the African hominoid trichotomy by use of a mitochondrial gene sequence.</title>
        <authorList>
            <person name="Ruvolo M."/>
            <person name="Disotell T.R."/>
            <person name="Allard M.W."/>
            <person name="Brown W.M."/>
            <person name="Honeycutt R.L."/>
        </authorList>
    </citation>
    <scope>NUCLEOTIDE SEQUENCE</scope>
</reference>
<reference key="2">
    <citation type="journal article" date="1995" name="Proc. Natl. Acad. Sci. U.S.A.">
        <title>Recent African origin of modern humans revealed by complete sequences of hominoid mitochondrial DNAs.</title>
        <authorList>
            <person name="Horai S."/>
            <person name="Hayasaka K."/>
            <person name="Kondo R."/>
            <person name="Tsugane K."/>
            <person name="Takahata N."/>
        </authorList>
    </citation>
    <scope>NUCLEOTIDE SEQUENCE [GENOMIC DNA]</scope>
</reference>
<keyword id="KW-0186">Copper</keyword>
<keyword id="KW-0249">Electron transport</keyword>
<keyword id="KW-0460">Magnesium</keyword>
<keyword id="KW-0472">Membrane</keyword>
<keyword id="KW-0479">Metal-binding</keyword>
<keyword id="KW-0496">Mitochondrion</keyword>
<keyword id="KW-0999">Mitochondrion inner membrane</keyword>
<keyword id="KW-1185">Reference proteome</keyword>
<keyword id="KW-0679">Respiratory chain</keyword>
<keyword id="KW-1278">Translocase</keyword>
<keyword id="KW-0812">Transmembrane</keyword>
<keyword id="KW-1133">Transmembrane helix</keyword>
<keyword id="KW-0813">Transport</keyword>
<organism>
    <name type="scientific">Pan paniscus</name>
    <name type="common">Pygmy chimpanzee</name>
    <name type="synonym">Bonobo</name>
    <dbReference type="NCBI Taxonomy" id="9597"/>
    <lineage>
        <taxon>Eukaryota</taxon>
        <taxon>Metazoa</taxon>
        <taxon>Chordata</taxon>
        <taxon>Craniata</taxon>
        <taxon>Vertebrata</taxon>
        <taxon>Euteleostomi</taxon>
        <taxon>Mammalia</taxon>
        <taxon>Eutheria</taxon>
        <taxon>Euarchontoglires</taxon>
        <taxon>Primates</taxon>
        <taxon>Haplorrhini</taxon>
        <taxon>Catarrhini</taxon>
        <taxon>Hominidae</taxon>
        <taxon>Pan</taxon>
    </lineage>
</organism>
<evidence type="ECO:0000250" key="1">
    <source>
        <dbReference type="UniProtKB" id="P00403"/>
    </source>
</evidence>
<evidence type="ECO:0000250" key="2">
    <source>
        <dbReference type="UniProtKB" id="P00410"/>
    </source>
</evidence>
<evidence type="ECO:0000250" key="3">
    <source>
        <dbReference type="UniProtKB" id="P68530"/>
    </source>
</evidence>
<evidence type="ECO:0000305" key="4"/>
<proteinExistence type="inferred from homology"/>
<geneLocation type="mitochondrion"/>
<sequence length="227" mass="25570">MAHAAQVGLQDATSPIMEELIIFHDHALMIIFLICFLVLYALFLTLTTKLTNTSISDAQEMETVWTILPAIILVLIALPSLRILYMTDEVNDPSFTIKSIGHQWYWTYEYTDYGGLIFNSYMLPPLFLEPGDLRLLDVDNRLVLPVEAPVRMMITSQDVLHSWAVPTLGLKTDAIPGRLNQTTFTATRPGVYYGQCSEICGANHSFMPIVLELIPLKIFEMGPVFTL</sequence>